<name>FLIN_BORBU</name>
<protein>
    <recommendedName>
        <fullName>Flagellar motor switch protein FliN</fullName>
    </recommendedName>
</protein>
<proteinExistence type="inferred from homology"/>
<accession>Q44903</accession>
<accession>Q44765</accession>
<sequence length="113" mass="12305">MSVDEKSDNGEKPEIKGVKLPDLIDTLPEGVDPSNFGLLMDVSMQLTVELGRTERKIKDILGMSEGTIITLDKLAGEPVDILVNGKIVAKGEVVVIDENFGVRITEIIKTKNE</sequence>
<keyword id="KW-0975">Bacterial flagellum</keyword>
<keyword id="KW-0997">Cell inner membrane</keyword>
<keyword id="KW-1003">Cell membrane</keyword>
<keyword id="KW-0145">Chemotaxis</keyword>
<keyword id="KW-0283">Flagellar rotation</keyword>
<keyword id="KW-0472">Membrane</keyword>
<keyword id="KW-1185">Reference proteome</keyword>
<reference key="1">
    <citation type="submission" date="1995-12" db="EMBL/GenBank/DDBJ databases">
        <authorList>
            <person name="Dunn J.J."/>
            <person name="Butler-Loffredo L."/>
            <person name="Kieleczawa J."/>
            <person name="Medalle J."/>
            <person name="Luft B.J."/>
        </authorList>
    </citation>
    <scope>NUCLEOTIDE SEQUENCE [GENOMIC DNA]</scope>
    <source>
        <strain>ATCC 35210 / DSM 4680 / CIP 102532 / B31</strain>
    </source>
</reference>
<reference key="2">
    <citation type="submission" date="1996-02" db="EMBL/GenBank/DDBJ databases">
        <authorList>
            <person name="Ge Y."/>
            <person name="Charon N.W."/>
        </authorList>
    </citation>
    <scope>NUCLEOTIDE SEQUENCE [GENOMIC DNA]</scope>
    <source>
        <strain>212</strain>
    </source>
</reference>
<reference key="3">
    <citation type="journal article" date="1997" name="Nature">
        <title>Genomic sequence of a Lyme disease spirochaete, Borrelia burgdorferi.</title>
        <authorList>
            <person name="Fraser C.M."/>
            <person name="Casjens S."/>
            <person name="Huang W.M."/>
            <person name="Sutton G.G."/>
            <person name="Clayton R.A."/>
            <person name="Lathigra R."/>
            <person name="White O."/>
            <person name="Ketchum K.A."/>
            <person name="Dodson R.J."/>
            <person name="Hickey E.K."/>
            <person name="Gwinn M.L."/>
            <person name="Dougherty B.A."/>
            <person name="Tomb J.-F."/>
            <person name="Fleischmann R.D."/>
            <person name="Richardson D.L."/>
            <person name="Peterson J.D."/>
            <person name="Kerlavage A.R."/>
            <person name="Quackenbush J."/>
            <person name="Salzberg S.L."/>
            <person name="Hanson M."/>
            <person name="van Vugt R."/>
            <person name="Palmer N."/>
            <person name="Adams M.D."/>
            <person name="Gocayne J.D."/>
            <person name="Weidman J.F."/>
            <person name="Utterback T.R."/>
            <person name="Watthey L."/>
            <person name="McDonald L.A."/>
            <person name="Artiach P."/>
            <person name="Bowman C."/>
            <person name="Garland S.A."/>
            <person name="Fujii C."/>
            <person name="Cotton M.D."/>
            <person name="Horst K."/>
            <person name="Roberts K.M."/>
            <person name="Hatch B."/>
            <person name="Smith H.O."/>
            <person name="Venter J.C."/>
        </authorList>
    </citation>
    <scope>NUCLEOTIDE SEQUENCE [LARGE SCALE GENOMIC DNA]</scope>
    <source>
        <strain>ATCC 35210 / DSM 4680 / CIP 102532 / B31</strain>
    </source>
</reference>
<organism>
    <name type="scientific">Borreliella burgdorferi (strain ATCC 35210 / DSM 4680 / CIP 102532 / B31)</name>
    <name type="common">Borrelia burgdorferi</name>
    <dbReference type="NCBI Taxonomy" id="224326"/>
    <lineage>
        <taxon>Bacteria</taxon>
        <taxon>Pseudomonadati</taxon>
        <taxon>Spirochaetota</taxon>
        <taxon>Spirochaetia</taxon>
        <taxon>Spirochaetales</taxon>
        <taxon>Borreliaceae</taxon>
        <taxon>Borreliella</taxon>
    </lineage>
</organism>
<evidence type="ECO:0000250" key="1"/>
<evidence type="ECO:0000305" key="2"/>
<dbReference type="EMBL" id="U43739">
    <property type="protein sequence ID" value="AAA85601.1"/>
    <property type="molecule type" value="Genomic_DNA"/>
</dbReference>
<dbReference type="EMBL" id="L75945">
    <property type="protein sequence ID" value="AAB58966.1"/>
    <property type="molecule type" value="Genomic_DNA"/>
</dbReference>
<dbReference type="EMBL" id="AE000783">
    <property type="protein sequence ID" value="AAC66671.1"/>
    <property type="molecule type" value="Genomic_DNA"/>
</dbReference>
<dbReference type="PIR" id="E70134">
    <property type="entry name" value="E70134"/>
</dbReference>
<dbReference type="RefSeq" id="NP_212411.1">
    <property type="nucleotide sequence ID" value="NC_001318.1"/>
</dbReference>
<dbReference type="RefSeq" id="WP_002556876.1">
    <property type="nucleotide sequence ID" value="NC_001318.1"/>
</dbReference>
<dbReference type="SMR" id="Q44903"/>
<dbReference type="STRING" id="224326.BB_0277"/>
<dbReference type="PaxDb" id="224326-BB_0277"/>
<dbReference type="EnsemblBacteria" id="AAC66671">
    <property type="protein sequence ID" value="AAC66671"/>
    <property type="gene ID" value="BB_0277"/>
</dbReference>
<dbReference type="GeneID" id="56567708"/>
<dbReference type="KEGG" id="bbu:BB_0277"/>
<dbReference type="PATRIC" id="fig|224326.49.peg.676"/>
<dbReference type="HOGENOM" id="CLU_097058_3_1_12"/>
<dbReference type="OrthoDB" id="9773459at2"/>
<dbReference type="Proteomes" id="UP000001807">
    <property type="component" value="Chromosome"/>
</dbReference>
<dbReference type="GO" id="GO:0009425">
    <property type="term" value="C:bacterial-type flagellum basal body"/>
    <property type="evidence" value="ECO:0007669"/>
    <property type="project" value="UniProtKB-SubCell"/>
</dbReference>
<dbReference type="GO" id="GO:0005886">
    <property type="term" value="C:plasma membrane"/>
    <property type="evidence" value="ECO:0007669"/>
    <property type="project" value="UniProtKB-SubCell"/>
</dbReference>
<dbReference type="GO" id="GO:0003774">
    <property type="term" value="F:cytoskeletal motor activity"/>
    <property type="evidence" value="ECO:0007669"/>
    <property type="project" value="InterPro"/>
</dbReference>
<dbReference type="GO" id="GO:0071973">
    <property type="term" value="P:bacterial-type flagellum-dependent cell motility"/>
    <property type="evidence" value="ECO:0007669"/>
    <property type="project" value="InterPro"/>
</dbReference>
<dbReference type="GO" id="GO:0006935">
    <property type="term" value="P:chemotaxis"/>
    <property type="evidence" value="ECO:0007669"/>
    <property type="project" value="UniProtKB-KW"/>
</dbReference>
<dbReference type="Gene3D" id="2.30.330.10">
    <property type="entry name" value="SpoA-like"/>
    <property type="match status" value="1"/>
</dbReference>
<dbReference type="InterPro" id="IPR012826">
    <property type="entry name" value="FliN"/>
</dbReference>
<dbReference type="InterPro" id="IPR001543">
    <property type="entry name" value="FliN-like_C"/>
</dbReference>
<dbReference type="InterPro" id="IPR051469">
    <property type="entry name" value="FliN/MopA/SpaO"/>
</dbReference>
<dbReference type="InterPro" id="IPR001172">
    <property type="entry name" value="FliN_T3SS_HrcQb"/>
</dbReference>
<dbReference type="InterPro" id="IPR036429">
    <property type="entry name" value="SpoA-like_sf"/>
</dbReference>
<dbReference type="NCBIfam" id="TIGR02480">
    <property type="entry name" value="fliN"/>
    <property type="match status" value="1"/>
</dbReference>
<dbReference type="PANTHER" id="PTHR43484">
    <property type="match status" value="1"/>
</dbReference>
<dbReference type="PANTHER" id="PTHR43484:SF1">
    <property type="entry name" value="FLAGELLAR MOTOR SWITCH PROTEIN FLIN"/>
    <property type="match status" value="1"/>
</dbReference>
<dbReference type="Pfam" id="PF01052">
    <property type="entry name" value="FliMN_C"/>
    <property type="match status" value="1"/>
</dbReference>
<dbReference type="PRINTS" id="PR00956">
    <property type="entry name" value="FLGMOTORFLIN"/>
</dbReference>
<dbReference type="SUPFAM" id="SSF101801">
    <property type="entry name" value="Surface presentation of antigens (SPOA)"/>
    <property type="match status" value="1"/>
</dbReference>
<feature type="chain" id="PRO_0000184113" description="Flagellar motor switch protein FliN">
    <location>
        <begin position="1"/>
        <end position="113"/>
    </location>
</feature>
<comment type="function">
    <text evidence="1">FliN is one of three proteins (FliG, FliN, FliM) that form the rotor-mounted switch complex (C ring), located at the base of the basal body. This complex interacts with the CheY and CheZ chemotaxis proteins, in addition to contacting components of the motor that determine the direction of flagellar rotation (By similarity).</text>
</comment>
<comment type="subcellular location">
    <subcellularLocation>
        <location evidence="2">Cell inner membrane</location>
        <topology evidence="2">Peripheral membrane protein</topology>
        <orientation evidence="2">Cytoplasmic side</orientation>
    </subcellularLocation>
    <subcellularLocation>
        <location evidence="2">Bacterial flagellum basal body</location>
    </subcellularLocation>
</comment>
<comment type="similarity">
    <text evidence="2">Belongs to the FliN/MopA/SpaO family.</text>
</comment>
<gene>
    <name type="primary">fliN</name>
    <name type="ordered locus">BB_0277</name>
</gene>